<keyword id="KW-0067">ATP-binding</keyword>
<keyword id="KW-0342">GTP-binding</keyword>
<keyword id="KW-0547">Nucleotide-binding</keyword>
<feature type="chain" id="PRO_0000383282" description="Nucleotide-binding protein ROP_69550">
    <location>
        <begin position="1"/>
        <end position="304"/>
    </location>
</feature>
<feature type="binding site" evidence="1">
    <location>
        <begin position="24"/>
        <end position="31"/>
    </location>
    <ligand>
        <name>ATP</name>
        <dbReference type="ChEBI" id="CHEBI:30616"/>
    </ligand>
</feature>
<feature type="binding site" evidence="1">
    <location>
        <begin position="75"/>
        <end position="78"/>
    </location>
    <ligand>
        <name>GTP</name>
        <dbReference type="ChEBI" id="CHEBI:37565"/>
    </ligand>
</feature>
<evidence type="ECO:0000255" key="1">
    <source>
        <dbReference type="HAMAP-Rule" id="MF_00636"/>
    </source>
</evidence>
<name>Y6955_RHOOB</name>
<gene>
    <name type="ordered locus">ROP_69550</name>
</gene>
<protein>
    <recommendedName>
        <fullName evidence="1">Nucleotide-binding protein ROP_69550</fullName>
    </recommendedName>
</protein>
<organism>
    <name type="scientific">Rhodococcus opacus (strain B4)</name>
    <dbReference type="NCBI Taxonomy" id="632772"/>
    <lineage>
        <taxon>Bacteria</taxon>
        <taxon>Bacillati</taxon>
        <taxon>Actinomycetota</taxon>
        <taxon>Actinomycetes</taxon>
        <taxon>Mycobacteriales</taxon>
        <taxon>Nocardiaceae</taxon>
        <taxon>Rhodococcus</taxon>
    </lineage>
</organism>
<accession>C1B4L3</accession>
<sequence length="304" mass="33614">MNEQHAQSDRPPTVRPMDFLLVTGLSGAGLQTAAKVLEDLGWYVADNLPPELISRMVDLSLESDSRLERLAVVIDVRSRLFTGDLGWVLTELESKPVHTRVLYLDASDEVLVRRFEQVRRSHPLSGGGAEGTLSEGIAAERDQLAKVKAAADLVIDTSSLAAHQLRQKIEDAFGDAENRTMQVTVQSFGFKYGLPMDADLVCDVRFLPNPHWIPELRPHTGQSADVRDYVLSQDGAEDYLATYHHLLDLTITGYRREGKRYMTIAVGCTGGKHRSVAMSEALAGRLGKDSGLNVRVVHRDLGRE</sequence>
<dbReference type="EMBL" id="AP011115">
    <property type="protein sequence ID" value="BAH55202.1"/>
    <property type="molecule type" value="Genomic_DNA"/>
</dbReference>
<dbReference type="SMR" id="C1B4L3"/>
<dbReference type="STRING" id="632772.ROP_69550"/>
<dbReference type="KEGG" id="rop:ROP_69550"/>
<dbReference type="PATRIC" id="fig|632772.20.peg.7246"/>
<dbReference type="HOGENOM" id="CLU_059558_0_0_11"/>
<dbReference type="OrthoDB" id="9784461at2"/>
<dbReference type="Proteomes" id="UP000002212">
    <property type="component" value="Chromosome"/>
</dbReference>
<dbReference type="GO" id="GO:0005524">
    <property type="term" value="F:ATP binding"/>
    <property type="evidence" value="ECO:0007669"/>
    <property type="project" value="UniProtKB-UniRule"/>
</dbReference>
<dbReference type="GO" id="GO:0005525">
    <property type="term" value="F:GTP binding"/>
    <property type="evidence" value="ECO:0007669"/>
    <property type="project" value="UniProtKB-UniRule"/>
</dbReference>
<dbReference type="Gene3D" id="3.40.50.300">
    <property type="entry name" value="P-loop containing nucleotide triphosphate hydrolases"/>
    <property type="match status" value="1"/>
</dbReference>
<dbReference type="HAMAP" id="MF_00636">
    <property type="entry name" value="RapZ_like"/>
    <property type="match status" value="1"/>
</dbReference>
<dbReference type="InterPro" id="IPR027417">
    <property type="entry name" value="P-loop_NTPase"/>
</dbReference>
<dbReference type="InterPro" id="IPR005337">
    <property type="entry name" value="RapZ-like"/>
</dbReference>
<dbReference type="InterPro" id="IPR053930">
    <property type="entry name" value="RapZ-like_N"/>
</dbReference>
<dbReference type="InterPro" id="IPR053931">
    <property type="entry name" value="RapZ_C"/>
</dbReference>
<dbReference type="NCBIfam" id="NF003828">
    <property type="entry name" value="PRK05416.1"/>
    <property type="match status" value="1"/>
</dbReference>
<dbReference type="PANTHER" id="PTHR30448">
    <property type="entry name" value="RNASE ADAPTER PROTEIN RAPZ"/>
    <property type="match status" value="1"/>
</dbReference>
<dbReference type="PANTHER" id="PTHR30448:SF0">
    <property type="entry name" value="RNASE ADAPTER PROTEIN RAPZ"/>
    <property type="match status" value="1"/>
</dbReference>
<dbReference type="Pfam" id="PF22740">
    <property type="entry name" value="PapZ_C"/>
    <property type="match status" value="1"/>
</dbReference>
<dbReference type="Pfam" id="PF03668">
    <property type="entry name" value="RapZ-like_N"/>
    <property type="match status" value="1"/>
</dbReference>
<dbReference type="PIRSF" id="PIRSF005052">
    <property type="entry name" value="P-loopkin"/>
    <property type="match status" value="1"/>
</dbReference>
<dbReference type="SUPFAM" id="SSF52540">
    <property type="entry name" value="P-loop containing nucleoside triphosphate hydrolases"/>
    <property type="match status" value="1"/>
</dbReference>
<proteinExistence type="inferred from homology"/>
<reference key="1">
    <citation type="submission" date="2009-03" db="EMBL/GenBank/DDBJ databases">
        <title>Comparison of the complete genome sequences of Rhodococcus erythropolis PR4 and Rhodococcus opacus B4.</title>
        <authorList>
            <person name="Takarada H."/>
            <person name="Sekine M."/>
            <person name="Hosoyama A."/>
            <person name="Yamada R."/>
            <person name="Fujisawa T."/>
            <person name="Omata S."/>
            <person name="Shimizu A."/>
            <person name="Tsukatani N."/>
            <person name="Tanikawa S."/>
            <person name="Fujita N."/>
            <person name="Harayama S."/>
        </authorList>
    </citation>
    <scope>NUCLEOTIDE SEQUENCE [LARGE SCALE GENOMIC DNA]</scope>
    <source>
        <strain>B4</strain>
    </source>
</reference>
<comment type="function">
    <text evidence="1">Displays ATPase and GTPase activities.</text>
</comment>
<comment type="similarity">
    <text evidence="1">Belongs to the RapZ-like family.</text>
</comment>